<accession>B2ING0</accession>
<feature type="chain" id="PRO_1000196477" description="Small ribosomal subunit protein bS16">
    <location>
        <begin position="1"/>
        <end position="95"/>
    </location>
</feature>
<gene>
    <name evidence="1" type="primary">rpsP</name>
    <name type="ordered locus">SPCG_0723</name>
</gene>
<protein>
    <recommendedName>
        <fullName evidence="1">Small ribosomal subunit protein bS16</fullName>
    </recommendedName>
    <alternativeName>
        <fullName evidence="2">30S ribosomal protein S16</fullName>
    </alternativeName>
</protein>
<proteinExistence type="inferred from homology"/>
<organism>
    <name type="scientific">Streptococcus pneumoniae (strain CGSP14)</name>
    <dbReference type="NCBI Taxonomy" id="516950"/>
    <lineage>
        <taxon>Bacteria</taxon>
        <taxon>Bacillati</taxon>
        <taxon>Bacillota</taxon>
        <taxon>Bacilli</taxon>
        <taxon>Lactobacillales</taxon>
        <taxon>Streptococcaceae</taxon>
        <taxon>Streptococcus</taxon>
    </lineage>
</organism>
<sequence>MAVKIRLTRMGSKKKPFYRINVADSRSPRDGRFIETVGTYNPLVAENQVTLKEDRVLAWLANGAQPSDTVRNILSKEGVLKKSTILNSQNKFKVG</sequence>
<dbReference type="EMBL" id="CP001033">
    <property type="protein sequence ID" value="ACB89975.1"/>
    <property type="molecule type" value="Genomic_DNA"/>
</dbReference>
<dbReference type="SMR" id="B2ING0"/>
<dbReference type="KEGG" id="spw:SPCG_0723"/>
<dbReference type="HOGENOM" id="CLU_100590_5_0_9"/>
<dbReference type="GO" id="GO:0005737">
    <property type="term" value="C:cytoplasm"/>
    <property type="evidence" value="ECO:0007669"/>
    <property type="project" value="UniProtKB-ARBA"/>
</dbReference>
<dbReference type="GO" id="GO:0015935">
    <property type="term" value="C:small ribosomal subunit"/>
    <property type="evidence" value="ECO:0007669"/>
    <property type="project" value="TreeGrafter"/>
</dbReference>
<dbReference type="GO" id="GO:0003735">
    <property type="term" value="F:structural constituent of ribosome"/>
    <property type="evidence" value="ECO:0007669"/>
    <property type="project" value="InterPro"/>
</dbReference>
<dbReference type="GO" id="GO:0006412">
    <property type="term" value="P:translation"/>
    <property type="evidence" value="ECO:0007669"/>
    <property type="project" value="UniProtKB-UniRule"/>
</dbReference>
<dbReference type="FunFam" id="3.30.1320.10:FF:000002">
    <property type="entry name" value="30S ribosomal protein S16"/>
    <property type="match status" value="1"/>
</dbReference>
<dbReference type="Gene3D" id="3.30.1320.10">
    <property type="match status" value="1"/>
</dbReference>
<dbReference type="HAMAP" id="MF_00385">
    <property type="entry name" value="Ribosomal_bS16"/>
    <property type="match status" value="1"/>
</dbReference>
<dbReference type="InterPro" id="IPR000307">
    <property type="entry name" value="Ribosomal_bS16"/>
</dbReference>
<dbReference type="InterPro" id="IPR023803">
    <property type="entry name" value="Ribosomal_bS16_dom_sf"/>
</dbReference>
<dbReference type="NCBIfam" id="TIGR00002">
    <property type="entry name" value="S16"/>
    <property type="match status" value="1"/>
</dbReference>
<dbReference type="PANTHER" id="PTHR12919">
    <property type="entry name" value="30S RIBOSOMAL PROTEIN S16"/>
    <property type="match status" value="1"/>
</dbReference>
<dbReference type="PANTHER" id="PTHR12919:SF20">
    <property type="entry name" value="SMALL RIBOSOMAL SUBUNIT PROTEIN BS16M"/>
    <property type="match status" value="1"/>
</dbReference>
<dbReference type="Pfam" id="PF00886">
    <property type="entry name" value="Ribosomal_S16"/>
    <property type="match status" value="1"/>
</dbReference>
<dbReference type="SUPFAM" id="SSF54565">
    <property type="entry name" value="Ribosomal protein S16"/>
    <property type="match status" value="1"/>
</dbReference>
<evidence type="ECO:0000255" key="1">
    <source>
        <dbReference type="HAMAP-Rule" id="MF_00385"/>
    </source>
</evidence>
<evidence type="ECO:0000305" key="2"/>
<keyword id="KW-0687">Ribonucleoprotein</keyword>
<keyword id="KW-0689">Ribosomal protein</keyword>
<comment type="similarity">
    <text evidence="1">Belongs to the bacterial ribosomal protein bS16 family.</text>
</comment>
<reference key="1">
    <citation type="journal article" date="2009" name="BMC Genomics">
        <title>Genome evolution driven by host adaptations results in a more virulent and antimicrobial-resistant Streptococcus pneumoniae serotype 14.</title>
        <authorList>
            <person name="Ding F."/>
            <person name="Tang P."/>
            <person name="Hsu M.-H."/>
            <person name="Cui P."/>
            <person name="Hu S."/>
            <person name="Yu J."/>
            <person name="Chiu C.-H."/>
        </authorList>
    </citation>
    <scope>NUCLEOTIDE SEQUENCE [LARGE SCALE GENOMIC DNA]</scope>
    <source>
        <strain>CGSP14</strain>
    </source>
</reference>
<name>RS16_STRPS</name>